<sequence>MSDSPTTAHTRLELPIDIIRIQALLPHRYPFLLVDRILELDQKQKRIVAQKNVSINEPFFQGHFPEHPVMPGVLIIEALAQAGGVMTQLNLSHNGHSSLLFYMVRVDNARFNKQVVPGDILILDMTMKRRIRNMGCYYGEARVNGEVVACADIMCAGVKS</sequence>
<proteinExistence type="inferred from homology"/>
<name>FABZ_XYLF2</name>
<comment type="function">
    <text evidence="1">Involved in unsaturated fatty acids biosynthesis. Catalyzes the dehydration of short chain beta-hydroxyacyl-ACPs and long chain saturated and unsaturated beta-hydroxyacyl-ACPs.</text>
</comment>
<comment type="catalytic activity">
    <reaction evidence="1">
        <text>a (3R)-hydroxyacyl-[ACP] = a (2E)-enoyl-[ACP] + H2O</text>
        <dbReference type="Rhea" id="RHEA:13097"/>
        <dbReference type="Rhea" id="RHEA-COMP:9925"/>
        <dbReference type="Rhea" id="RHEA-COMP:9945"/>
        <dbReference type="ChEBI" id="CHEBI:15377"/>
        <dbReference type="ChEBI" id="CHEBI:78784"/>
        <dbReference type="ChEBI" id="CHEBI:78827"/>
        <dbReference type="EC" id="4.2.1.59"/>
    </reaction>
</comment>
<comment type="subcellular location">
    <subcellularLocation>
        <location evidence="1">Cytoplasm</location>
    </subcellularLocation>
</comment>
<comment type="similarity">
    <text evidence="1">Belongs to the thioester dehydratase family. FabZ subfamily.</text>
</comment>
<gene>
    <name evidence="1" type="primary">fabZ</name>
    <name type="ordered locus">XfasM23_0320</name>
</gene>
<reference key="1">
    <citation type="journal article" date="2010" name="J. Bacteriol.">
        <title>Whole genome sequences of two Xylella fastidiosa strains (M12 and M23) causing almond leaf scorch disease in California.</title>
        <authorList>
            <person name="Chen J."/>
            <person name="Xie G."/>
            <person name="Han S."/>
            <person name="Chertkov O."/>
            <person name="Sims D."/>
            <person name="Civerolo E.L."/>
        </authorList>
    </citation>
    <scope>NUCLEOTIDE SEQUENCE [LARGE SCALE GENOMIC DNA]</scope>
    <source>
        <strain>M23</strain>
    </source>
</reference>
<accession>B2I7P0</accession>
<feature type="chain" id="PRO_1000197306" description="3-hydroxyacyl-[acyl-carrier-protein] dehydratase FabZ">
    <location>
        <begin position="1"/>
        <end position="160"/>
    </location>
</feature>
<feature type="active site" evidence="1">
    <location>
        <position position="63"/>
    </location>
</feature>
<protein>
    <recommendedName>
        <fullName evidence="1">3-hydroxyacyl-[acyl-carrier-protein] dehydratase FabZ</fullName>
        <ecNumber evidence="1">4.2.1.59</ecNumber>
    </recommendedName>
    <alternativeName>
        <fullName evidence="1">(3R)-hydroxymyristoyl-[acyl-carrier-protein] dehydratase</fullName>
        <shortName evidence="1">(3R)-hydroxymyristoyl-ACP dehydrase</shortName>
    </alternativeName>
    <alternativeName>
        <fullName evidence="1">Beta-hydroxyacyl-ACP dehydratase</fullName>
    </alternativeName>
</protein>
<dbReference type="EC" id="4.2.1.59" evidence="1"/>
<dbReference type="EMBL" id="CP001011">
    <property type="protein sequence ID" value="ACB91768.1"/>
    <property type="molecule type" value="Genomic_DNA"/>
</dbReference>
<dbReference type="RefSeq" id="WP_004089335.1">
    <property type="nucleotide sequence ID" value="NC_010577.1"/>
</dbReference>
<dbReference type="SMR" id="B2I7P0"/>
<dbReference type="GeneID" id="93904025"/>
<dbReference type="KEGG" id="xfn:XfasM23_0320"/>
<dbReference type="HOGENOM" id="CLU_078912_1_2_6"/>
<dbReference type="Proteomes" id="UP000001698">
    <property type="component" value="Chromosome"/>
</dbReference>
<dbReference type="GO" id="GO:0005737">
    <property type="term" value="C:cytoplasm"/>
    <property type="evidence" value="ECO:0007669"/>
    <property type="project" value="UniProtKB-SubCell"/>
</dbReference>
<dbReference type="GO" id="GO:0016020">
    <property type="term" value="C:membrane"/>
    <property type="evidence" value="ECO:0007669"/>
    <property type="project" value="GOC"/>
</dbReference>
<dbReference type="GO" id="GO:0019171">
    <property type="term" value="F:(3R)-hydroxyacyl-[acyl-carrier-protein] dehydratase activity"/>
    <property type="evidence" value="ECO:0007669"/>
    <property type="project" value="UniProtKB-EC"/>
</dbReference>
<dbReference type="GO" id="GO:0006633">
    <property type="term" value="P:fatty acid biosynthetic process"/>
    <property type="evidence" value="ECO:0007669"/>
    <property type="project" value="UniProtKB-UniRule"/>
</dbReference>
<dbReference type="GO" id="GO:0009245">
    <property type="term" value="P:lipid A biosynthetic process"/>
    <property type="evidence" value="ECO:0007669"/>
    <property type="project" value="UniProtKB-UniRule"/>
</dbReference>
<dbReference type="CDD" id="cd01288">
    <property type="entry name" value="FabZ"/>
    <property type="match status" value="1"/>
</dbReference>
<dbReference type="FunFam" id="3.10.129.10:FF:000001">
    <property type="entry name" value="3-hydroxyacyl-[acyl-carrier-protein] dehydratase FabZ"/>
    <property type="match status" value="1"/>
</dbReference>
<dbReference type="Gene3D" id="3.10.129.10">
    <property type="entry name" value="Hotdog Thioesterase"/>
    <property type="match status" value="1"/>
</dbReference>
<dbReference type="HAMAP" id="MF_00406">
    <property type="entry name" value="FabZ"/>
    <property type="match status" value="1"/>
</dbReference>
<dbReference type="InterPro" id="IPR013114">
    <property type="entry name" value="FabA_FabZ"/>
</dbReference>
<dbReference type="InterPro" id="IPR010084">
    <property type="entry name" value="FabZ"/>
</dbReference>
<dbReference type="InterPro" id="IPR029069">
    <property type="entry name" value="HotDog_dom_sf"/>
</dbReference>
<dbReference type="NCBIfam" id="TIGR01750">
    <property type="entry name" value="fabZ"/>
    <property type="match status" value="1"/>
</dbReference>
<dbReference type="NCBIfam" id="NF000582">
    <property type="entry name" value="PRK00006.1"/>
    <property type="match status" value="1"/>
</dbReference>
<dbReference type="PANTHER" id="PTHR30272">
    <property type="entry name" value="3-HYDROXYACYL-[ACYL-CARRIER-PROTEIN] DEHYDRATASE"/>
    <property type="match status" value="1"/>
</dbReference>
<dbReference type="PANTHER" id="PTHR30272:SF1">
    <property type="entry name" value="3-HYDROXYACYL-[ACYL-CARRIER-PROTEIN] DEHYDRATASE"/>
    <property type="match status" value="1"/>
</dbReference>
<dbReference type="Pfam" id="PF07977">
    <property type="entry name" value="FabA"/>
    <property type="match status" value="1"/>
</dbReference>
<dbReference type="SUPFAM" id="SSF54637">
    <property type="entry name" value="Thioesterase/thiol ester dehydrase-isomerase"/>
    <property type="match status" value="1"/>
</dbReference>
<keyword id="KW-0963">Cytoplasm</keyword>
<keyword id="KW-0441">Lipid A biosynthesis</keyword>
<keyword id="KW-0444">Lipid biosynthesis</keyword>
<keyword id="KW-0443">Lipid metabolism</keyword>
<keyword id="KW-0456">Lyase</keyword>
<evidence type="ECO:0000255" key="1">
    <source>
        <dbReference type="HAMAP-Rule" id="MF_00406"/>
    </source>
</evidence>
<organism>
    <name type="scientific">Xylella fastidiosa (strain M23)</name>
    <dbReference type="NCBI Taxonomy" id="405441"/>
    <lineage>
        <taxon>Bacteria</taxon>
        <taxon>Pseudomonadati</taxon>
        <taxon>Pseudomonadota</taxon>
        <taxon>Gammaproteobacteria</taxon>
        <taxon>Lysobacterales</taxon>
        <taxon>Lysobacteraceae</taxon>
        <taxon>Xylella</taxon>
    </lineage>
</organism>